<organism>
    <name type="scientific">Orientia tsutsugamushi (strain Ikeda)</name>
    <name type="common">Rickettsia tsutsugamushi</name>
    <dbReference type="NCBI Taxonomy" id="334380"/>
    <lineage>
        <taxon>Bacteria</taxon>
        <taxon>Pseudomonadati</taxon>
        <taxon>Pseudomonadota</taxon>
        <taxon>Alphaproteobacteria</taxon>
        <taxon>Rickettsiales</taxon>
        <taxon>Rickettsiaceae</taxon>
        <taxon>Rickettsieae</taxon>
        <taxon>Orientia</taxon>
    </lineage>
</organism>
<dbReference type="EC" id="2.7.4.3" evidence="1"/>
<dbReference type="EMBL" id="AP008981">
    <property type="protein sequence ID" value="BAG40523.1"/>
    <property type="molecule type" value="Genomic_DNA"/>
</dbReference>
<dbReference type="SMR" id="B3CT26"/>
<dbReference type="KEGG" id="ott:OTT_1065"/>
<dbReference type="HOGENOM" id="CLU_032354_1_2_5"/>
<dbReference type="OrthoDB" id="9805030at2"/>
<dbReference type="UniPathway" id="UPA00588">
    <property type="reaction ID" value="UER00649"/>
</dbReference>
<dbReference type="Proteomes" id="UP000001033">
    <property type="component" value="Chromosome"/>
</dbReference>
<dbReference type="GO" id="GO:0005737">
    <property type="term" value="C:cytoplasm"/>
    <property type="evidence" value="ECO:0007669"/>
    <property type="project" value="UniProtKB-SubCell"/>
</dbReference>
<dbReference type="GO" id="GO:0004017">
    <property type="term" value="F:adenylate kinase activity"/>
    <property type="evidence" value="ECO:0007669"/>
    <property type="project" value="UniProtKB-UniRule"/>
</dbReference>
<dbReference type="GO" id="GO:0005524">
    <property type="term" value="F:ATP binding"/>
    <property type="evidence" value="ECO:0007669"/>
    <property type="project" value="UniProtKB-UniRule"/>
</dbReference>
<dbReference type="GO" id="GO:0008270">
    <property type="term" value="F:zinc ion binding"/>
    <property type="evidence" value="ECO:0007669"/>
    <property type="project" value="UniProtKB-UniRule"/>
</dbReference>
<dbReference type="GO" id="GO:0044209">
    <property type="term" value="P:AMP salvage"/>
    <property type="evidence" value="ECO:0007669"/>
    <property type="project" value="UniProtKB-UniRule"/>
</dbReference>
<dbReference type="CDD" id="cd01428">
    <property type="entry name" value="ADK"/>
    <property type="match status" value="1"/>
</dbReference>
<dbReference type="Gene3D" id="3.40.50.300">
    <property type="entry name" value="P-loop containing nucleotide triphosphate hydrolases"/>
    <property type="match status" value="1"/>
</dbReference>
<dbReference type="HAMAP" id="MF_00235">
    <property type="entry name" value="Adenylate_kinase_Adk"/>
    <property type="match status" value="1"/>
</dbReference>
<dbReference type="InterPro" id="IPR006259">
    <property type="entry name" value="Adenyl_kin_sub"/>
</dbReference>
<dbReference type="InterPro" id="IPR000850">
    <property type="entry name" value="Adenylat/UMP-CMP_kin"/>
</dbReference>
<dbReference type="InterPro" id="IPR033690">
    <property type="entry name" value="Adenylat_kinase_CS"/>
</dbReference>
<dbReference type="InterPro" id="IPR007862">
    <property type="entry name" value="Adenylate_kinase_lid-dom"/>
</dbReference>
<dbReference type="InterPro" id="IPR036193">
    <property type="entry name" value="ADK_active_lid_dom_sf"/>
</dbReference>
<dbReference type="InterPro" id="IPR027417">
    <property type="entry name" value="P-loop_NTPase"/>
</dbReference>
<dbReference type="NCBIfam" id="TIGR01351">
    <property type="entry name" value="adk"/>
    <property type="match status" value="1"/>
</dbReference>
<dbReference type="PANTHER" id="PTHR23359">
    <property type="entry name" value="NUCLEOTIDE KINASE"/>
    <property type="match status" value="1"/>
</dbReference>
<dbReference type="Pfam" id="PF00406">
    <property type="entry name" value="ADK"/>
    <property type="match status" value="1"/>
</dbReference>
<dbReference type="Pfam" id="PF05191">
    <property type="entry name" value="ADK_lid"/>
    <property type="match status" value="1"/>
</dbReference>
<dbReference type="PRINTS" id="PR00094">
    <property type="entry name" value="ADENYLTKNASE"/>
</dbReference>
<dbReference type="SUPFAM" id="SSF57774">
    <property type="entry name" value="Microbial and mitochondrial ADK, insert 'zinc finger' domain"/>
    <property type="match status" value="1"/>
</dbReference>
<dbReference type="SUPFAM" id="SSF52540">
    <property type="entry name" value="P-loop containing nucleoside triphosphate hydrolases"/>
    <property type="match status" value="1"/>
</dbReference>
<dbReference type="PROSITE" id="PS00113">
    <property type="entry name" value="ADENYLATE_KINASE"/>
    <property type="match status" value="1"/>
</dbReference>
<sequence length="214" mass="24016">MRISLILVFIGPPGSGKGTQASLLSEKFSIISVGKVLRTVMESNTAEADVVKKFIKSGKLVPSNITNKIVVNALKNIDQCKSIILDGYPRDIFQADFLQENLQMDFKVLFFDIDDAVVLRRLSGRISCTDCGTIYNKLYCMPKINGVCDICNSSSFQNRVDDDESIIKLRLESYKKETLPLLEFYKAQDKLTLIDANQSTENILKKIKKISGIY</sequence>
<keyword id="KW-0067">ATP-binding</keyword>
<keyword id="KW-0963">Cytoplasm</keyword>
<keyword id="KW-0418">Kinase</keyword>
<keyword id="KW-0479">Metal-binding</keyword>
<keyword id="KW-0545">Nucleotide biosynthesis</keyword>
<keyword id="KW-0547">Nucleotide-binding</keyword>
<keyword id="KW-0808">Transferase</keyword>
<keyword id="KW-0862">Zinc</keyword>
<reference key="1">
    <citation type="journal article" date="2008" name="DNA Res.">
        <title>The whole-genome sequencing of the obligate intracellular bacterium Orientia tsutsugamushi revealed massive gene amplification during reductive genome evolution.</title>
        <authorList>
            <person name="Nakayama K."/>
            <person name="Yamashita A."/>
            <person name="Kurokawa K."/>
            <person name="Morimoto T."/>
            <person name="Ogawa M."/>
            <person name="Fukuhara M."/>
            <person name="Urakami H."/>
            <person name="Ohnishi M."/>
            <person name="Uchiyama I."/>
            <person name="Ogura Y."/>
            <person name="Ooka T."/>
            <person name="Oshima K."/>
            <person name="Tamura A."/>
            <person name="Hattori M."/>
            <person name="Hayashi T."/>
        </authorList>
    </citation>
    <scope>NUCLEOTIDE SEQUENCE [LARGE SCALE GENOMIC DNA]</scope>
    <source>
        <strain>Ikeda</strain>
    </source>
</reference>
<evidence type="ECO:0000255" key="1">
    <source>
        <dbReference type="HAMAP-Rule" id="MF_00235"/>
    </source>
</evidence>
<name>KAD_ORITI</name>
<proteinExistence type="inferred from homology"/>
<feature type="chain" id="PRO_1000191160" description="Adenylate kinase">
    <location>
        <begin position="1"/>
        <end position="214"/>
    </location>
</feature>
<feature type="region of interest" description="NMP" evidence="1">
    <location>
        <begin position="32"/>
        <end position="61"/>
    </location>
</feature>
<feature type="region of interest" description="LID" evidence="1">
    <location>
        <begin position="124"/>
        <end position="162"/>
    </location>
</feature>
<feature type="binding site" evidence="1">
    <location>
        <begin position="14"/>
        <end position="19"/>
    </location>
    <ligand>
        <name>ATP</name>
        <dbReference type="ChEBI" id="CHEBI:30616"/>
    </ligand>
</feature>
<feature type="binding site" evidence="1">
    <location>
        <position position="38"/>
    </location>
    <ligand>
        <name>AMP</name>
        <dbReference type="ChEBI" id="CHEBI:456215"/>
    </ligand>
</feature>
<feature type="binding site" evidence="1">
    <location>
        <begin position="59"/>
        <end position="61"/>
    </location>
    <ligand>
        <name>AMP</name>
        <dbReference type="ChEBI" id="CHEBI:456215"/>
    </ligand>
</feature>
<feature type="binding site" evidence="1">
    <location>
        <begin position="87"/>
        <end position="90"/>
    </location>
    <ligand>
        <name>AMP</name>
        <dbReference type="ChEBI" id="CHEBI:456215"/>
    </ligand>
</feature>
<feature type="binding site" evidence="1">
    <location>
        <position position="94"/>
    </location>
    <ligand>
        <name>AMP</name>
        <dbReference type="ChEBI" id="CHEBI:456215"/>
    </ligand>
</feature>
<feature type="binding site" evidence="1">
    <location>
        <position position="125"/>
    </location>
    <ligand>
        <name>ATP</name>
        <dbReference type="ChEBI" id="CHEBI:30616"/>
    </ligand>
</feature>
<feature type="binding site" evidence="1">
    <location>
        <position position="128"/>
    </location>
    <ligand>
        <name>Zn(2+)</name>
        <dbReference type="ChEBI" id="CHEBI:29105"/>
        <note>structural</note>
    </ligand>
</feature>
<feature type="binding site" evidence="1">
    <location>
        <position position="131"/>
    </location>
    <ligand>
        <name>Zn(2+)</name>
        <dbReference type="ChEBI" id="CHEBI:29105"/>
        <note>structural</note>
    </ligand>
</feature>
<feature type="binding site" evidence="1">
    <location>
        <begin position="134"/>
        <end position="135"/>
    </location>
    <ligand>
        <name>ATP</name>
        <dbReference type="ChEBI" id="CHEBI:30616"/>
    </ligand>
</feature>
<feature type="binding site" evidence="1">
    <location>
        <position position="148"/>
    </location>
    <ligand>
        <name>Zn(2+)</name>
        <dbReference type="ChEBI" id="CHEBI:29105"/>
        <note>structural</note>
    </ligand>
</feature>
<feature type="binding site" evidence="1">
    <location>
        <position position="151"/>
    </location>
    <ligand>
        <name>Zn(2+)</name>
        <dbReference type="ChEBI" id="CHEBI:29105"/>
        <note>structural</note>
    </ligand>
</feature>
<feature type="binding site" evidence="1">
    <location>
        <position position="159"/>
    </location>
    <ligand>
        <name>AMP</name>
        <dbReference type="ChEBI" id="CHEBI:456215"/>
    </ligand>
</feature>
<feature type="binding site" evidence="1">
    <location>
        <position position="170"/>
    </location>
    <ligand>
        <name>AMP</name>
        <dbReference type="ChEBI" id="CHEBI:456215"/>
    </ligand>
</feature>
<feature type="binding site" evidence="1">
    <location>
        <position position="198"/>
    </location>
    <ligand>
        <name>ATP</name>
        <dbReference type="ChEBI" id="CHEBI:30616"/>
    </ligand>
</feature>
<gene>
    <name evidence="1" type="primary">adk</name>
    <name type="ordered locus">OTT_1065</name>
</gene>
<accession>B3CT26</accession>
<protein>
    <recommendedName>
        <fullName evidence="1">Adenylate kinase</fullName>
        <shortName evidence="1">AK</shortName>
        <ecNumber evidence="1">2.7.4.3</ecNumber>
    </recommendedName>
    <alternativeName>
        <fullName evidence="1">ATP-AMP transphosphorylase</fullName>
    </alternativeName>
    <alternativeName>
        <fullName evidence="1">ATP:AMP phosphotransferase</fullName>
    </alternativeName>
    <alternativeName>
        <fullName evidence="1">Adenylate monophosphate kinase</fullName>
    </alternativeName>
</protein>
<comment type="function">
    <text evidence="1">Catalyzes the reversible transfer of the terminal phosphate group between ATP and AMP. Plays an important role in cellular energy homeostasis and in adenine nucleotide metabolism.</text>
</comment>
<comment type="catalytic activity">
    <reaction evidence="1">
        <text>AMP + ATP = 2 ADP</text>
        <dbReference type="Rhea" id="RHEA:12973"/>
        <dbReference type="ChEBI" id="CHEBI:30616"/>
        <dbReference type="ChEBI" id="CHEBI:456215"/>
        <dbReference type="ChEBI" id="CHEBI:456216"/>
        <dbReference type="EC" id="2.7.4.3"/>
    </reaction>
</comment>
<comment type="pathway">
    <text evidence="1">Purine metabolism; AMP biosynthesis via salvage pathway; AMP from ADP: step 1/1.</text>
</comment>
<comment type="subunit">
    <text evidence="1">Monomer.</text>
</comment>
<comment type="subcellular location">
    <subcellularLocation>
        <location evidence="1">Cytoplasm</location>
    </subcellularLocation>
</comment>
<comment type="domain">
    <text evidence="1">Consists of three domains, a large central CORE domain and two small peripheral domains, NMPbind and LID, which undergo movements during catalysis. The LID domain closes over the site of phosphoryl transfer upon ATP binding. Assembling and dissambling the active center during each catalytic cycle provides an effective means to prevent ATP hydrolysis. Some bacteria have evolved a zinc-coordinating structure that stabilizes the LID domain.</text>
</comment>
<comment type="similarity">
    <text evidence="1">Belongs to the adenylate kinase family.</text>
</comment>